<gene>
    <name evidence="1" type="primary">murI</name>
    <name type="ordered locus">HAPS_1881</name>
</gene>
<dbReference type="EC" id="5.1.1.3" evidence="1"/>
<dbReference type="EMBL" id="CP001321">
    <property type="protein sequence ID" value="ACL33370.1"/>
    <property type="molecule type" value="Genomic_DNA"/>
</dbReference>
<dbReference type="RefSeq" id="WP_015939956.1">
    <property type="nucleotide sequence ID" value="NC_011852.1"/>
</dbReference>
<dbReference type="SMR" id="B8F7R8"/>
<dbReference type="STRING" id="557723.HAPS_1881"/>
<dbReference type="KEGG" id="hap:HAPS_1881"/>
<dbReference type="HOGENOM" id="CLU_052344_2_0_6"/>
<dbReference type="UniPathway" id="UPA00219"/>
<dbReference type="Proteomes" id="UP000006743">
    <property type="component" value="Chromosome"/>
</dbReference>
<dbReference type="GO" id="GO:0008881">
    <property type="term" value="F:glutamate racemase activity"/>
    <property type="evidence" value="ECO:0007669"/>
    <property type="project" value="UniProtKB-UniRule"/>
</dbReference>
<dbReference type="GO" id="GO:0071555">
    <property type="term" value="P:cell wall organization"/>
    <property type="evidence" value="ECO:0007669"/>
    <property type="project" value="UniProtKB-KW"/>
</dbReference>
<dbReference type="GO" id="GO:0009252">
    <property type="term" value="P:peptidoglycan biosynthetic process"/>
    <property type="evidence" value="ECO:0007669"/>
    <property type="project" value="UniProtKB-UniRule"/>
</dbReference>
<dbReference type="GO" id="GO:0008360">
    <property type="term" value="P:regulation of cell shape"/>
    <property type="evidence" value="ECO:0007669"/>
    <property type="project" value="UniProtKB-KW"/>
</dbReference>
<dbReference type="FunFam" id="3.40.50.1860:FF:000001">
    <property type="entry name" value="Glutamate racemase"/>
    <property type="match status" value="1"/>
</dbReference>
<dbReference type="Gene3D" id="3.40.50.1860">
    <property type="match status" value="2"/>
</dbReference>
<dbReference type="HAMAP" id="MF_00258">
    <property type="entry name" value="Glu_racemase"/>
    <property type="match status" value="1"/>
</dbReference>
<dbReference type="InterPro" id="IPR015942">
    <property type="entry name" value="Asp/Glu/hydantoin_racemase"/>
</dbReference>
<dbReference type="InterPro" id="IPR001920">
    <property type="entry name" value="Asp/Glu_race"/>
</dbReference>
<dbReference type="InterPro" id="IPR018187">
    <property type="entry name" value="Asp/Glu_racemase_AS_1"/>
</dbReference>
<dbReference type="InterPro" id="IPR033134">
    <property type="entry name" value="Asp/Glu_racemase_AS_2"/>
</dbReference>
<dbReference type="InterPro" id="IPR004391">
    <property type="entry name" value="Glu_race"/>
</dbReference>
<dbReference type="NCBIfam" id="TIGR00067">
    <property type="entry name" value="glut_race"/>
    <property type="match status" value="1"/>
</dbReference>
<dbReference type="PANTHER" id="PTHR21198">
    <property type="entry name" value="GLUTAMATE RACEMASE"/>
    <property type="match status" value="1"/>
</dbReference>
<dbReference type="PANTHER" id="PTHR21198:SF2">
    <property type="entry name" value="GLUTAMATE RACEMASE"/>
    <property type="match status" value="1"/>
</dbReference>
<dbReference type="Pfam" id="PF01177">
    <property type="entry name" value="Asp_Glu_race"/>
    <property type="match status" value="1"/>
</dbReference>
<dbReference type="SUPFAM" id="SSF53681">
    <property type="entry name" value="Aspartate/glutamate racemase"/>
    <property type="match status" value="2"/>
</dbReference>
<dbReference type="PROSITE" id="PS00923">
    <property type="entry name" value="ASP_GLU_RACEMASE_1"/>
    <property type="match status" value="1"/>
</dbReference>
<dbReference type="PROSITE" id="PS00924">
    <property type="entry name" value="ASP_GLU_RACEMASE_2"/>
    <property type="match status" value="1"/>
</dbReference>
<protein>
    <recommendedName>
        <fullName evidence="1">Glutamate racemase</fullName>
        <ecNumber evidence="1">5.1.1.3</ecNumber>
    </recommendedName>
</protein>
<accession>B8F7R8</accession>
<reference key="1">
    <citation type="journal article" date="2009" name="J. Bacteriol.">
        <title>Complete genome sequence of Haemophilus parasuis SH0165.</title>
        <authorList>
            <person name="Yue M."/>
            <person name="Yang F."/>
            <person name="Yang J."/>
            <person name="Bei W."/>
            <person name="Cai X."/>
            <person name="Chen L."/>
            <person name="Dong J."/>
            <person name="Zhou R."/>
            <person name="Jin M."/>
            <person name="Jin Q."/>
            <person name="Chen H."/>
        </authorList>
    </citation>
    <scope>NUCLEOTIDE SEQUENCE [LARGE SCALE GENOMIC DNA]</scope>
    <source>
        <strain>SH0165</strain>
    </source>
</reference>
<feature type="chain" id="PRO_1000125610" description="Glutamate racemase">
    <location>
        <begin position="1"/>
        <end position="267"/>
    </location>
</feature>
<feature type="active site" description="Proton donor/acceptor" evidence="1">
    <location>
        <position position="73"/>
    </location>
</feature>
<feature type="active site" description="Proton donor/acceptor" evidence="1">
    <location>
        <position position="184"/>
    </location>
</feature>
<feature type="binding site" evidence="1">
    <location>
        <begin position="9"/>
        <end position="10"/>
    </location>
    <ligand>
        <name>substrate</name>
    </ligand>
</feature>
<feature type="binding site" evidence="1">
    <location>
        <begin position="41"/>
        <end position="42"/>
    </location>
    <ligand>
        <name>substrate</name>
    </ligand>
</feature>
<feature type="binding site" evidence="1">
    <location>
        <begin position="74"/>
        <end position="75"/>
    </location>
    <ligand>
        <name>substrate</name>
    </ligand>
</feature>
<feature type="binding site" evidence="1">
    <location>
        <begin position="185"/>
        <end position="186"/>
    </location>
    <ligand>
        <name>substrate</name>
    </ligand>
</feature>
<sequence length="267" mass="30126">MKPTILLYDSGMGGLTIYDAIRENLPDAHYLYCFDNAYFPYSEKSEAVLIELAVGIVQKIAENYPLDMVVVACNTASTVVLPALRERFAMPIVGTVPAIKPAAQISQTKTIGLLATKGTVTRPYVDELIERYAKDCVVERIGSTDLVEIVEEKQQTGSVDMRRLQKVVEEWQSHPTLDTVILGCTHFPLVKEELQQLLPRVSFFVDPGNGIANRVVSLLQDVKRNVNNENKENQAFCTQNSENFLKREKVMQNWGFKRLNILNFVEK</sequence>
<organism>
    <name type="scientific">Glaesserella parasuis serovar 5 (strain SH0165)</name>
    <name type="common">Haemophilus parasuis</name>
    <dbReference type="NCBI Taxonomy" id="557723"/>
    <lineage>
        <taxon>Bacteria</taxon>
        <taxon>Pseudomonadati</taxon>
        <taxon>Pseudomonadota</taxon>
        <taxon>Gammaproteobacteria</taxon>
        <taxon>Pasteurellales</taxon>
        <taxon>Pasteurellaceae</taxon>
        <taxon>Glaesserella</taxon>
    </lineage>
</organism>
<comment type="function">
    <text evidence="1">Provides the (R)-glutamate required for cell wall biosynthesis.</text>
</comment>
<comment type="catalytic activity">
    <reaction evidence="1">
        <text>L-glutamate = D-glutamate</text>
        <dbReference type="Rhea" id="RHEA:12813"/>
        <dbReference type="ChEBI" id="CHEBI:29985"/>
        <dbReference type="ChEBI" id="CHEBI:29986"/>
        <dbReference type="EC" id="5.1.1.3"/>
    </reaction>
</comment>
<comment type="pathway">
    <text evidence="1">Cell wall biogenesis; peptidoglycan biosynthesis.</text>
</comment>
<comment type="similarity">
    <text evidence="1">Belongs to the aspartate/glutamate racemases family.</text>
</comment>
<proteinExistence type="inferred from homology"/>
<keyword id="KW-0133">Cell shape</keyword>
<keyword id="KW-0961">Cell wall biogenesis/degradation</keyword>
<keyword id="KW-0413">Isomerase</keyword>
<keyword id="KW-0573">Peptidoglycan synthesis</keyword>
<keyword id="KW-1185">Reference proteome</keyword>
<name>MURI_GLAP5</name>
<evidence type="ECO:0000255" key="1">
    <source>
        <dbReference type="HAMAP-Rule" id="MF_00258"/>
    </source>
</evidence>